<keyword id="KW-0175">Coiled coil</keyword>
<keyword id="KW-0403">Intermediate filament</keyword>
<keyword id="KW-0416">Keratin</keyword>
<keyword id="KW-1267">Proteomics identification</keyword>
<keyword id="KW-1185">Reference proteome</keyword>
<sequence length="404" mass="46214">MPYNFCLPSLSCRTSCSSRPCVPPSCHGYTLPGACNIPANVSNCNWFCEGSFNGSEKETMQFLNDRLASYLEKVRQLERDNAELENLIRERSQQQEPLLCPSYQSYFKTIEELQQKILCSKSENARLVVQIDNAKLAADDFRTKYQTEQSLRQLVESDINSLRRILDELTLCRSDLEAQMESLKEELLSLKQNHEQEVNTLRCQLGDRLNVEVDAAPAVDLNQVLNETRNQYEALVETNRREVEQWFATQTEELNKQVVSSSEQLQSYQAEIIELRRTVNALEIELQAQHNLRYSLENTLTESEARYSSQLSQVQSLITNVESQLAEIRSDLERQNQEYQVLLDVRARLECEINTYRSLLESEDCKLPSNPCATTNACEKPIGSCVTNPCGPRSRCGPCNTFGY</sequence>
<organism>
    <name type="scientific">Homo sapiens</name>
    <name type="common">Human</name>
    <dbReference type="NCBI Taxonomy" id="9606"/>
    <lineage>
        <taxon>Eukaryota</taxon>
        <taxon>Metazoa</taxon>
        <taxon>Chordata</taxon>
        <taxon>Craniata</taxon>
        <taxon>Vertebrata</taxon>
        <taxon>Euteleostomi</taxon>
        <taxon>Mammalia</taxon>
        <taxon>Eutheria</taxon>
        <taxon>Euarchontoglires</taxon>
        <taxon>Primates</taxon>
        <taxon>Haplorrhini</taxon>
        <taxon>Catarrhini</taxon>
        <taxon>Hominidae</taxon>
        <taxon>Homo</taxon>
    </lineage>
</organism>
<proteinExistence type="evidence at protein level"/>
<gene>
    <name type="primary">KRT33B</name>
    <name type="synonym">HHA3-II</name>
    <name type="synonym">HKA3B</name>
    <name type="synonym">KRTHA3B</name>
</gene>
<feature type="chain" id="PRO_0000063689" description="Keratin, type I cuticular Ha3-II">
    <location>
        <begin position="1"/>
        <end position="404"/>
    </location>
</feature>
<feature type="domain" description="IF rod" evidence="1">
    <location>
        <begin position="56"/>
        <end position="367"/>
    </location>
</feature>
<feature type="region of interest" description="Head">
    <location>
        <begin position="1"/>
        <end position="56"/>
    </location>
</feature>
<feature type="region of interest" description="Coil 1A">
    <location>
        <begin position="57"/>
        <end position="91"/>
    </location>
</feature>
<feature type="region of interest" description="Linker 1">
    <location>
        <begin position="92"/>
        <end position="102"/>
    </location>
</feature>
<feature type="region of interest" description="Coil 1B">
    <location>
        <begin position="103"/>
        <end position="203"/>
    </location>
</feature>
<feature type="region of interest" description="Linker 12">
    <location>
        <begin position="204"/>
        <end position="219"/>
    </location>
</feature>
<feature type="region of interest" description="Coil 2">
    <location>
        <begin position="220"/>
        <end position="363"/>
    </location>
</feature>
<feature type="region of interest" description="Tail">
    <location>
        <begin position="364"/>
        <end position="404"/>
    </location>
</feature>
<feature type="site" description="Stutter">
    <location>
        <position position="305"/>
    </location>
</feature>
<feature type="sequence conflict" description="In Ref. 3; CAA57956." evidence="2" ref="3">
    <original>QL</original>
    <variation>HV</variation>
    <location>
        <begin position="76"/>
        <end position="77"/>
    </location>
</feature>
<name>KT33B_HUMAN</name>
<reference key="1">
    <citation type="journal article" date="1998" name="J. Biol. Chem.">
        <title>Characterization of a 190-kilobase pair domain of human type I hair keratin genes.</title>
        <authorList>
            <person name="Rogers M.A."/>
            <person name="Winter H."/>
            <person name="Wolf C."/>
            <person name="Heck M."/>
            <person name="Schweizer J."/>
        </authorList>
    </citation>
    <scope>NUCLEOTIDE SEQUENCE [GENOMIC DNA]</scope>
</reference>
<reference key="2">
    <citation type="journal article" date="2004" name="Genome Res.">
        <title>The status, quality, and expansion of the NIH full-length cDNA project: the Mammalian Gene Collection (MGC).</title>
        <authorList>
            <consortium name="The MGC Project Team"/>
        </authorList>
    </citation>
    <scope>NUCLEOTIDE SEQUENCE [LARGE SCALE MRNA]</scope>
    <source>
        <tissue>Kidney</tissue>
    </source>
</reference>
<reference key="3">
    <citation type="journal article" date="1994" name="Mol. Biol. Rep.">
        <title>A novel human type I hair keratin gene: evidence for two keratin hHa3 isoforms.</title>
        <authorList>
            <person name="Rogers M.A."/>
            <person name="Schweizer J."/>
            <person name="Kreig T."/>
            <person name="Winter H."/>
        </authorList>
    </citation>
    <scope>NUCLEOTIDE SEQUENCE [MRNA] OF 44-404</scope>
    <source>
        <tissue>Hair</tissue>
    </source>
</reference>
<reference key="4">
    <citation type="submission" date="1998-03" db="EMBL/GenBank/DDBJ databases">
        <authorList>
            <person name="Rogers M.A."/>
        </authorList>
    </citation>
    <scope>SEQUENCE REVISION</scope>
</reference>
<dbReference type="EMBL" id="Y16789">
    <property type="protein sequence ID" value="CAA76385.1"/>
    <property type="molecule type" value="Genomic_DNA"/>
</dbReference>
<dbReference type="EMBL" id="BC009971">
    <property type="protein sequence ID" value="AAH09971.1"/>
    <property type="molecule type" value="mRNA"/>
</dbReference>
<dbReference type="EMBL" id="X82634">
    <property type="protein sequence ID" value="CAA57956.1"/>
    <property type="molecule type" value="mRNA"/>
</dbReference>
<dbReference type="CCDS" id="CCDS11389.1"/>
<dbReference type="PIR" id="I37459">
    <property type="entry name" value="I37459"/>
</dbReference>
<dbReference type="RefSeq" id="NP_002270.1">
    <property type="nucleotide sequence ID" value="NM_002279.5"/>
</dbReference>
<dbReference type="SMR" id="Q14525"/>
<dbReference type="BioGRID" id="110082">
    <property type="interactions" value="100"/>
</dbReference>
<dbReference type="FunCoup" id="Q14525">
    <property type="interactions" value="312"/>
</dbReference>
<dbReference type="IntAct" id="Q14525">
    <property type="interactions" value="101"/>
</dbReference>
<dbReference type="MINT" id="Q14525"/>
<dbReference type="STRING" id="9606.ENSP00000251646"/>
<dbReference type="GlyGen" id="Q14525">
    <property type="glycosylation" value="1 site, 1 O-linked glycan (1 site)"/>
</dbReference>
<dbReference type="iPTMnet" id="Q14525"/>
<dbReference type="PhosphoSitePlus" id="Q14525"/>
<dbReference type="SwissPalm" id="Q14525"/>
<dbReference type="BioMuta" id="KRT33B"/>
<dbReference type="DMDM" id="6686299"/>
<dbReference type="jPOST" id="Q14525"/>
<dbReference type="MassIVE" id="Q14525"/>
<dbReference type="PaxDb" id="9606-ENSP00000251646"/>
<dbReference type="PeptideAtlas" id="Q14525"/>
<dbReference type="PRIDE" id="Q14525"/>
<dbReference type="ProteomicsDB" id="60027"/>
<dbReference type="Antibodypedia" id="28829">
    <property type="antibodies" value="154 antibodies from 28 providers"/>
</dbReference>
<dbReference type="DNASU" id="3884"/>
<dbReference type="Ensembl" id="ENST00000251646.8">
    <property type="protein sequence ID" value="ENSP00000251646.3"/>
    <property type="gene ID" value="ENSG00000131738.11"/>
</dbReference>
<dbReference type="Ensembl" id="ENST00000570596.1">
    <property type="protein sequence ID" value="ENSP00000459509.1"/>
    <property type="gene ID" value="ENSG00000263012.1"/>
</dbReference>
<dbReference type="Ensembl" id="ENST00000709591.1">
    <property type="protein sequence ID" value="ENSP00000517783.1"/>
    <property type="gene ID" value="ENSG00000292028.1"/>
</dbReference>
<dbReference type="GeneID" id="3884"/>
<dbReference type="KEGG" id="hsa:3884"/>
<dbReference type="MANE-Select" id="ENST00000251646.8">
    <property type="protein sequence ID" value="ENSP00000251646.3"/>
    <property type="RefSeq nucleotide sequence ID" value="NM_002279.5"/>
    <property type="RefSeq protein sequence ID" value="NP_002270.1"/>
</dbReference>
<dbReference type="UCSC" id="uc002hwl.4">
    <property type="organism name" value="human"/>
</dbReference>
<dbReference type="AGR" id="HGNC:6451"/>
<dbReference type="CTD" id="3884"/>
<dbReference type="GeneCards" id="KRT33B"/>
<dbReference type="HGNC" id="HGNC:6451">
    <property type="gene designation" value="KRT33B"/>
</dbReference>
<dbReference type="HPA" id="ENSG00000131738">
    <property type="expression patterns" value="Tissue enriched (skin)"/>
</dbReference>
<dbReference type="MIM" id="602762">
    <property type="type" value="gene"/>
</dbReference>
<dbReference type="neXtProt" id="NX_Q14525"/>
<dbReference type="OpenTargets" id="ENSG00000131738"/>
<dbReference type="PharmGKB" id="PA30240"/>
<dbReference type="VEuPathDB" id="HostDB:ENSG00000131738"/>
<dbReference type="eggNOG" id="ENOG502SNBF">
    <property type="taxonomic scope" value="Eukaryota"/>
</dbReference>
<dbReference type="GeneTree" id="ENSGT00940000163841"/>
<dbReference type="InParanoid" id="Q14525"/>
<dbReference type="OMA" id="TRCGPCS"/>
<dbReference type="OrthoDB" id="2441647at2759"/>
<dbReference type="PAN-GO" id="Q14525">
    <property type="GO annotations" value="3 GO annotations based on evolutionary models"/>
</dbReference>
<dbReference type="PhylomeDB" id="Q14525"/>
<dbReference type="TreeFam" id="TF332742"/>
<dbReference type="PathwayCommons" id="Q14525"/>
<dbReference type="Reactome" id="R-HSA-6805567">
    <property type="pathway name" value="Keratinization"/>
</dbReference>
<dbReference type="Reactome" id="R-HSA-6809371">
    <property type="pathway name" value="Formation of the cornified envelope"/>
</dbReference>
<dbReference type="SignaLink" id="Q14525"/>
<dbReference type="BioGRID-ORCS" id="3884">
    <property type="hits" value="8 hits in 1145 CRISPR screens"/>
</dbReference>
<dbReference type="ChiTaRS" id="KRT33B">
    <property type="organism name" value="human"/>
</dbReference>
<dbReference type="GeneWiki" id="KRT33B"/>
<dbReference type="GenomeRNAi" id="3884"/>
<dbReference type="Pharos" id="Q14525">
    <property type="development level" value="Tbio"/>
</dbReference>
<dbReference type="PRO" id="PR:Q14525"/>
<dbReference type="Proteomes" id="UP000005640">
    <property type="component" value="Chromosome 17"/>
</dbReference>
<dbReference type="RNAct" id="Q14525">
    <property type="molecule type" value="protein"/>
</dbReference>
<dbReference type="Bgee" id="ENSG00000131738">
    <property type="expression patterns" value="Expressed in prefrontal cortex and 46 other cell types or tissues"/>
</dbReference>
<dbReference type="GO" id="GO:0005856">
    <property type="term" value="C:cytoskeleton"/>
    <property type="evidence" value="ECO:0000318"/>
    <property type="project" value="GO_Central"/>
</dbReference>
<dbReference type="GO" id="GO:0005829">
    <property type="term" value="C:cytosol"/>
    <property type="evidence" value="ECO:0000304"/>
    <property type="project" value="Reactome"/>
</dbReference>
<dbReference type="GO" id="GO:0070062">
    <property type="term" value="C:extracellular exosome"/>
    <property type="evidence" value="ECO:0007005"/>
    <property type="project" value="UniProtKB"/>
</dbReference>
<dbReference type="GO" id="GO:0005615">
    <property type="term" value="C:extracellular space"/>
    <property type="evidence" value="ECO:0007005"/>
    <property type="project" value="UniProtKB"/>
</dbReference>
<dbReference type="GO" id="GO:0005882">
    <property type="term" value="C:intermediate filament"/>
    <property type="evidence" value="ECO:0007669"/>
    <property type="project" value="UniProtKB-KW"/>
</dbReference>
<dbReference type="GO" id="GO:0005198">
    <property type="term" value="F:structural molecule activity"/>
    <property type="evidence" value="ECO:0007669"/>
    <property type="project" value="InterPro"/>
</dbReference>
<dbReference type="GO" id="GO:0030855">
    <property type="term" value="P:epithelial cell differentiation"/>
    <property type="evidence" value="ECO:0000318"/>
    <property type="project" value="GO_Central"/>
</dbReference>
<dbReference type="GO" id="GO:0042633">
    <property type="term" value="P:hair cycle"/>
    <property type="evidence" value="ECO:0000314"/>
    <property type="project" value="UniProtKB"/>
</dbReference>
<dbReference type="GO" id="GO:0045109">
    <property type="term" value="P:intermediate filament organization"/>
    <property type="evidence" value="ECO:0000318"/>
    <property type="project" value="GO_Central"/>
</dbReference>
<dbReference type="FunFam" id="1.20.5.1160:FF:000002">
    <property type="entry name" value="Type I keratin 10"/>
    <property type="match status" value="1"/>
</dbReference>
<dbReference type="FunFam" id="1.20.5.170:FF:000002">
    <property type="entry name" value="Type I keratin KA11"/>
    <property type="match status" value="1"/>
</dbReference>
<dbReference type="FunFam" id="1.20.5.500:FF:000001">
    <property type="entry name" value="Type II keratin 23"/>
    <property type="match status" value="1"/>
</dbReference>
<dbReference type="Gene3D" id="1.20.5.170">
    <property type="match status" value="1"/>
</dbReference>
<dbReference type="Gene3D" id="1.20.5.500">
    <property type="entry name" value="Single helix bin"/>
    <property type="match status" value="1"/>
</dbReference>
<dbReference type="Gene3D" id="1.20.5.1160">
    <property type="entry name" value="Vasodilator-stimulated phosphoprotein"/>
    <property type="match status" value="1"/>
</dbReference>
<dbReference type="InterPro" id="IPR018039">
    <property type="entry name" value="IF_conserved"/>
</dbReference>
<dbReference type="InterPro" id="IPR039008">
    <property type="entry name" value="IF_rod_dom"/>
</dbReference>
<dbReference type="InterPro" id="IPR002957">
    <property type="entry name" value="Keratin_I"/>
</dbReference>
<dbReference type="PANTHER" id="PTHR23239">
    <property type="entry name" value="INTERMEDIATE FILAMENT"/>
    <property type="match status" value="1"/>
</dbReference>
<dbReference type="PANTHER" id="PTHR23239:SF99">
    <property type="entry name" value="KERATIN, TYPE I CUTICULAR HA3-II"/>
    <property type="match status" value="1"/>
</dbReference>
<dbReference type="Pfam" id="PF00038">
    <property type="entry name" value="Filament"/>
    <property type="match status" value="1"/>
</dbReference>
<dbReference type="PRINTS" id="PR01248">
    <property type="entry name" value="TYPE1KERATIN"/>
</dbReference>
<dbReference type="SMART" id="SM01391">
    <property type="entry name" value="Filament"/>
    <property type="match status" value="1"/>
</dbReference>
<dbReference type="SUPFAM" id="SSF64593">
    <property type="entry name" value="Intermediate filament protein, coiled coil region"/>
    <property type="match status" value="2"/>
</dbReference>
<dbReference type="PROSITE" id="PS00226">
    <property type="entry name" value="IF_ROD_1"/>
    <property type="match status" value="1"/>
</dbReference>
<dbReference type="PROSITE" id="PS51842">
    <property type="entry name" value="IF_ROD_2"/>
    <property type="match status" value="1"/>
</dbReference>
<comment type="interaction">
    <interactant intactId="EBI-1049638">
        <id>Q14525</id>
    </interactant>
    <interactant intactId="EBI-743598">
        <id>Q9NYB9</id>
        <label>ABI2</label>
    </interactant>
    <organismsDiffer>false</organismsDiffer>
    <experiments>3</experiments>
</comment>
<comment type="interaction">
    <interactant intactId="EBI-1049638">
        <id>Q14525</id>
    </interactant>
    <interactant intactId="EBI-745226">
        <id>Q13155</id>
        <label>AIMP2</label>
    </interactant>
    <organismsDiffer>false</organismsDiffer>
    <experiments>3</experiments>
</comment>
<comment type="interaction">
    <interactant intactId="EBI-1049638">
        <id>Q14525</id>
    </interactant>
    <interactant intactId="EBI-745213">
        <id>P29972</id>
        <label>AQP1</label>
    </interactant>
    <organismsDiffer>false</organismsDiffer>
    <experiments>3</experiments>
</comment>
<comment type="interaction">
    <interactant intactId="EBI-1049638">
        <id>Q14525</id>
    </interactant>
    <interactant intactId="EBI-2808808">
        <id>P53367</id>
        <label>ARFIP1</label>
    </interactant>
    <organismsDiffer>false</organismsDiffer>
    <experiments>3</experiments>
</comment>
<comment type="interaction">
    <interactant intactId="EBI-1049638">
        <id>Q14525</id>
    </interactant>
    <interactant intactId="EBI-12006308">
        <id>Q7Z3C6-3</id>
        <label>ATG9A</label>
    </interactant>
    <organismsDiffer>false</organismsDiffer>
    <experiments>3</experiments>
</comment>
<comment type="interaction">
    <interactant intactId="EBI-1049638">
        <id>Q14525</id>
    </interactant>
    <interactant intactId="EBI-747505">
        <id>Q8TAB5</id>
        <label>C1orf216</label>
    </interactant>
    <organismsDiffer>false</organismsDiffer>
    <experiments>3</experiments>
</comment>
<comment type="interaction">
    <interactant intactId="EBI-1049638">
        <id>Q14525</id>
    </interactant>
    <interactant intactId="EBI-1104933">
        <id>Q8N4L8</id>
        <label>CCDC24</label>
    </interactant>
    <organismsDiffer>false</organismsDiffer>
    <experiments>3</experiments>
</comment>
<comment type="interaction">
    <interactant intactId="EBI-1049638">
        <id>Q14525</id>
    </interactant>
    <interactant intactId="EBI-355710">
        <id>P48643</id>
        <label>CCT5</label>
    </interactant>
    <organismsDiffer>false</organismsDiffer>
    <experiments>3</experiments>
</comment>
<comment type="interaction">
    <interactant intactId="EBI-1049638">
        <id>Q14525</id>
    </interactant>
    <interactant intactId="EBI-25837549">
        <id>P28329-3</id>
        <label>CHAT</label>
    </interactant>
    <organismsDiffer>false</organismsDiffer>
    <experiments>3</experiments>
</comment>
<comment type="interaction">
    <interactant intactId="EBI-1049638">
        <id>Q14525</id>
    </interactant>
    <interactant intactId="EBI-741032">
        <id>Q8NE01</id>
        <label>CNNM3</label>
    </interactant>
    <organismsDiffer>false</organismsDiffer>
    <experiments>3</experiments>
</comment>
<comment type="interaction">
    <interactant intactId="EBI-1049638">
        <id>Q14525</id>
    </interactant>
    <interactant intactId="EBI-1053725">
        <id>P10606</id>
        <label>COX5B</label>
    </interactant>
    <organismsDiffer>false</organismsDiffer>
    <experiments>3</experiments>
</comment>
<comment type="interaction">
    <interactant intactId="EBI-1049638">
        <id>Q14525</id>
    </interactant>
    <interactant intactId="EBI-3867333">
        <id>A8MQ03</id>
        <label>CYSRT1</label>
    </interactant>
    <organismsDiffer>false</organismsDiffer>
    <experiments>3</experiments>
</comment>
<comment type="interaction">
    <interactant intactId="EBI-1049638">
        <id>Q14525</id>
    </interactant>
    <interactant intactId="EBI-1055572">
        <id>P17661</id>
        <label>DES</label>
    </interactant>
    <organismsDiffer>false</organismsDiffer>
    <experiments>3</experiments>
</comment>
<comment type="interaction">
    <interactant intactId="EBI-1049638">
        <id>Q14525</id>
    </interactant>
    <interactant intactId="EBI-10976677">
        <id>G5E9A7</id>
        <label>DMWD</label>
    </interactant>
    <organismsDiffer>false</organismsDiffer>
    <experiments>3</experiments>
</comment>
<comment type="interaction">
    <interactant intactId="EBI-1049638">
        <id>Q14525</id>
    </interactant>
    <interactant intactId="EBI-11984733">
        <id>O60941-5</id>
        <label>DTNB</label>
    </interactant>
    <organismsDiffer>false</organismsDiffer>
    <experiments>3</experiments>
</comment>
<comment type="interaction">
    <interactant intactId="EBI-1049638">
        <id>Q14525</id>
    </interactant>
    <interactant intactId="EBI-7357329">
        <id>Q9H596</id>
        <label>DUSP21</label>
    </interactant>
    <organismsDiffer>false</organismsDiffer>
    <experiments>3</experiments>
</comment>
<comment type="interaction">
    <interactant intactId="EBI-1049638">
        <id>Q14525</id>
    </interactant>
    <interactant intactId="EBI-495538">
        <id>P48023</id>
        <label>FASLG</label>
    </interactant>
    <organismsDiffer>false</organismsDiffer>
    <experiments>3</experiments>
</comment>
<comment type="interaction">
    <interactant intactId="EBI-1049638">
        <id>Q14525</id>
    </interactant>
    <interactant intactId="EBI-348399">
        <id>P22607</id>
        <label>FGFR3</label>
    </interactant>
    <organismsDiffer>false</organismsDiffer>
    <experiments>3</experiments>
</comment>
<comment type="interaction">
    <interactant intactId="EBI-1049638">
        <id>Q14525</id>
    </interactant>
    <interactant intactId="EBI-725515">
        <id>O43559</id>
        <label>FRS3</label>
    </interactant>
    <organismsDiffer>false</organismsDiffer>
    <experiments>3</experiments>
</comment>
<comment type="interaction">
    <interactant intactId="EBI-1049638">
        <id>Q14525</id>
    </interactant>
    <interactant intactId="EBI-744302">
        <id>P14136</id>
        <label>GFAP</label>
    </interactant>
    <organismsDiffer>false</organismsDiffer>
    <experiments>3</experiments>
</comment>
<comment type="interaction">
    <interactant intactId="EBI-1049638">
        <id>Q14525</id>
    </interactant>
    <interactant intactId="EBI-10268729">
        <id>Q8N9W4-2</id>
        <label>GOLGA6L2</label>
    </interactant>
    <organismsDiffer>false</organismsDiffer>
    <experiments>3</experiments>
</comment>
<comment type="interaction">
    <interactant intactId="EBI-1049638">
        <id>Q14525</id>
    </interactant>
    <interactant intactId="EBI-351506">
        <id>P06396</id>
        <label>GSN</label>
    </interactant>
    <organismsDiffer>false</organismsDiffer>
    <experiments>3</experiments>
</comment>
<comment type="interaction">
    <interactant intactId="EBI-1049638">
        <id>Q14525</id>
    </interactant>
    <interactant intactId="EBI-353467">
        <id>P09211</id>
        <label>GSTP1</label>
    </interactant>
    <organismsDiffer>false</organismsDiffer>
    <experiments>3</experiments>
</comment>
<comment type="interaction">
    <interactant intactId="EBI-1049638">
        <id>Q14525</id>
    </interactant>
    <interactant intactId="EBI-11956675">
        <id>Q9GZV7</id>
        <label>HAPLN2</label>
    </interactant>
    <organismsDiffer>false</organismsDiffer>
    <experiments>3</experiments>
</comment>
<comment type="interaction">
    <interactant intactId="EBI-1049638">
        <id>Q14525</id>
    </interactant>
    <interactant intactId="EBI-11953488">
        <id>P56524-2</id>
        <label>HDAC4</label>
    </interactant>
    <organismsDiffer>false</organismsDiffer>
    <experiments>3</experiments>
</comment>
<comment type="interaction">
    <interactant intactId="EBI-1049638">
        <id>Q14525</id>
    </interactant>
    <interactant intactId="EBI-740220">
        <id>O14964</id>
        <label>HGS</label>
    </interactant>
    <organismsDiffer>false</organismsDiffer>
    <experiments>6</experiments>
</comment>
<comment type="interaction">
    <interactant intactId="EBI-1049638">
        <id>Q14525</id>
    </interactant>
    <interactant intactId="EBI-740785">
        <id>P49639</id>
        <label>HOXA1</label>
    </interactant>
    <organismsDiffer>false</organismsDiffer>
    <experiments>3</experiments>
</comment>
<comment type="interaction">
    <interactant intactId="EBI-1049638">
        <id>Q14525</id>
    </interactant>
    <interactant intactId="EBI-350145">
        <id>P01112</id>
        <label>HRAS</label>
    </interactant>
    <organismsDiffer>false</organismsDiffer>
    <experiments>3</experiments>
</comment>
<comment type="interaction">
    <interactant intactId="EBI-1049638">
        <id>Q14525</id>
    </interactant>
    <interactant intactId="EBI-517086">
        <id>O43464</id>
        <label>HTRA2</label>
    </interactant>
    <organismsDiffer>false</organismsDiffer>
    <experiments>3</experiments>
</comment>
<comment type="interaction">
    <interactant intactId="EBI-1049638">
        <id>Q14525</id>
    </interactant>
    <interactant intactId="EBI-466029">
        <id>P42858</id>
        <label>HTT</label>
    </interactant>
    <organismsDiffer>false</organismsDiffer>
    <experiments>12</experiments>
</comment>
<comment type="interaction">
    <interactant intactId="EBI-1049638">
        <id>Q14525</id>
    </interactant>
    <interactant intactId="EBI-6509505">
        <id>Q0VD86</id>
        <label>INCA1</label>
    </interactant>
    <organismsDiffer>false</organismsDiffer>
    <experiments>3</experiments>
</comment>
<comment type="interaction">
    <interactant intactId="EBI-1049638">
        <id>Q14525</id>
    </interactant>
    <interactant intactId="EBI-710124">
        <id>O60341</id>
        <label>KDM1A</label>
    </interactant>
    <organismsDiffer>false</organismsDiffer>
    <experiments>4</experiments>
</comment>
<comment type="interaction">
    <interactant intactId="EBI-1049638">
        <id>Q14525</id>
    </interactant>
    <interactant intactId="EBI-10975473">
        <id>O60333-2</id>
        <label>KIF1B</label>
    </interactant>
    <organismsDiffer>false</organismsDiffer>
    <experiments>3</experiments>
</comment>
<comment type="interaction">
    <interactant intactId="EBI-1049638">
        <id>Q14525</id>
    </interactant>
    <interactant intactId="EBI-949319">
        <id>Q9NSK0</id>
        <label>KLC4</label>
    </interactant>
    <organismsDiffer>false</organismsDiffer>
    <experiments>3</experiments>
</comment>
<comment type="interaction">
    <interactant intactId="EBI-1049638">
        <id>Q14525</id>
    </interactant>
    <interactant intactId="EBI-948266">
        <id>O14901</id>
        <label>KLF11</label>
    </interactant>
    <organismsDiffer>false</organismsDiffer>
    <experiments>3</experiments>
</comment>
<comment type="interaction">
    <interactant intactId="EBI-1049638">
        <id>Q14525</id>
    </interactant>
    <interactant intactId="EBI-298429">
        <id>P04264</id>
        <label>KRT1</label>
    </interactant>
    <organismsDiffer>false</organismsDiffer>
    <experiments>7</experiments>
</comment>
<comment type="interaction">
    <interactant intactId="EBI-1049638">
        <id>Q14525</id>
    </interactant>
    <interactant intactId="EBI-1247312">
        <id>P35908</id>
        <label>KRT2</label>
    </interactant>
    <organismsDiffer>false</organismsDiffer>
    <experiments>3</experiments>
</comment>
<comment type="interaction">
    <interactant intactId="EBI-1049638">
        <id>Q14525</id>
    </interactant>
    <interactant intactId="EBI-2430095">
        <id>P12035</id>
        <label>KRT3</label>
    </interactant>
    <organismsDiffer>false</organismsDiffer>
    <experiments>3</experiments>
</comment>
<comment type="interaction">
    <interactant intactId="EBI-1049638">
        <id>Q14525</id>
    </interactant>
    <interactant intactId="EBI-2371606">
        <id>P19013</id>
        <label>KRT4</label>
    </interactant>
    <organismsDiffer>false</organismsDiffer>
    <experiments>7</experiments>
</comment>
<comment type="interaction">
    <interactant intactId="EBI-1049638">
        <id>Q14525</id>
    </interactant>
    <interactant intactId="EBI-740907">
        <id>P04259</id>
        <label>KRT6B</label>
    </interactant>
    <organismsDiffer>false</organismsDiffer>
    <experiments>5</experiments>
</comment>
<comment type="interaction">
    <interactant intactId="EBI-1049638">
        <id>Q14525</id>
    </interactant>
    <interactant intactId="EBI-2564105">
        <id>P48668</id>
        <label>KRT6C</label>
    </interactant>
    <organismsDiffer>false</organismsDiffer>
    <experiments>3</experiments>
</comment>
<comment type="interaction">
    <interactant intactId="EBI-1049638">
        <id>Q14525</id>
    </interactant>
    <interactant intactId="EBI-2952676">
        <id>Q3SY84</id>
        <label>KRT71</label>
    </interactant>
    <organismsDiffer>false</organismsDiffer>
    <experiments>3</experiments>
</comment>
<comment type="interaction">
    <interactant intactId="EBI-1049638">
        <id>Q14525</id>
    </interactant>
    <interactant intactId="EBI-1221280">
        <id>Q14CN4</id>
        <label>KRT72</label>
    </interactant>
    <organismsDiffer>false</organismsDiffer>
    <experiments>3</experiments>
</comment>
<comment type="interaction">
    <interactant intactId="EBI-1049638">
        <id>Q14525</id>
    </interactant>
    <interactant intactId="EBI-2949715">
        <id>O95678</id>
        <label>KRT75</label>
    </interactant>
    <organismsDiffer>false</organismsDiffer>
    <experiments>3</experiments>
</comment>
<comment type="interaction">
    <interactant intactId="EBI-1049638">
        <id>Q14525</id>
    </interactant>
    <interactant intactId="EBI-1056564">
        <id>Q8N1N4</id>
        <label>KRT78</label>
    </interactant>
    <organismsDiffer>false</organismsDiffer>
    <experiments>5</experiments>
</comment>
<comment type="interaction">
    <interactant intactId="EBI-1049638">
        <id>Q14525</id>
    </interactant>
    <interactant intactId="EBI-2514135">
        <id>Q5XKE5</id>
        <label>KRT79</label>
    </interactant>
    <organismsDiffer>false</organismsDiffer>
    <experiments>8</experiments>
</comment>
<comment type="interaction">
    <interactant intactId="EBI-1049638">
        <id>Q14525</id>
    </interactant>
    <interactant intactId="EBI-297852">
        <id>P05787</id>
        <label>KRT8</label>
    </interactant>
    <organismsDiffer>false</organismsDiffer>
    <experiments>5</experiments>
</comment>
<comment type="interaction">
    <interactant intactId="EBI-1049638">
        <id>Q14525</id>
    </interactant>
    <interactant intactId="EBI-11999246">
        <id>Q6KB66-2</id>
        <label>KRT80</label>
    </interactant>
    <organismsDiffer>false</organismsDiffer>
    <experiments>3</experiments>
</comment>
<comment type="interaction">
    <interactant intactId="EBI-1049638">
        <id>Q14525</id>
    </interactant>
    <interactant intactId="EBI-1045341">
        <id>Q9NSB4</id>
        <label>KRT82</label>
    </interactant>
    <organismsDiffer>false</organismsDiffer>
    <experiments>3</experiments>
</comment>
<comment type="interaction">
    <interactant intactId="EBI-1049638">
        <id>Q14525</id>
    </interactant>
    <interactant intactId="EBI-10221390">
        <id>P78385</id>
        <label>KRT83</label>
    </interactant>
    <organismsDiffer>false</organismsDiffer>
    <experiments>3</experiments>
</comment>
<comment type="interaction">
    <interactant intactId="EBI-1049638">
        <id>Q14525</id>
    </interactant>
    <interactant intactId="EBI-1049371">
        <id>P78386</id>
        <label>KRT85</label>
    </interactant>
    <organismsDiffer>false</organismsDiffer>
    <experiments>3</experiments>
</comment>
<comment type="interaction">
    <interactant intactId="EBI-1049638">
        <id>Q14525</id>
    </interactant>
    <interactant intactId="EBI-9996498">
        <id>O43790</id>
        <label>KRT86</label>
    </interactant>
    <organismsDiffer>false</organismsDiffer>
    <experiments>3</experiments>
</comment>
<comment type="interaction">
    <interactant intactId="EBI-1049638">
        <id>Q14525</id>
    </interactant>
    <interactant intactId="EBI-2798728">
        <id>P61968</id>
        <label>LMO4</label>
    </interactant>
    <organismsDiffer>false</organismsDiffer>
    <experiments>3</experiments>
</comment>
<comment type="interaction">
    <interactant intactId="EBI-1049638">
        <id>Q14525</id>
    </interactant>
    <interactant intactId="EBI-1757866">
        <id>P00540</id>
        <label>MOS</label>
    </interactant>
    <organismsDiffer>false</organismsDiffer>
    <experiments>3</experiments>
</comment>
<comment type="interaction">
    <interactant intactId="EBI-1049638">
        <id>Q14525</id>
    </interactant>
    <interactant intactId="EBI-713665">
        <id>P19404</id>
        <label>NDUFV2</label>
    </interactant>
    <organismsDiffer>false</organismsDiffer>
    <experiments>3</experiments>
</comment>
<comment type="interaction">
    <interactant intactId="EBI-1049638">
        <id>Q14525</id>
    </interactant>
    <interactant intactId="EBI-475646">
        <id>P07196</id>
        <label>NEFL</label>
    </interactant>
    <organismsDiffer>false</organismsDiffer>
    <experiments>3</experiments>
</comment>
<comment type="interaction">
    <interactant intactId="EBI-1049638">
        <id>Q14525</id>
    </interactant>
    <interactant intactId="EBI-1014472">
        <id>P35240</id>
        <label>NF2</label>
    </interactant>
    <organismsDiffer>false</organismsDiffer>
    <experiments>3</experiments>
</comment>
<comment type="interaction">
    <interactant intactId="EBI-1049638">
        <id>Q14525</id>
    </interactant>
    <interactant intactId="EBI-1391623">
        <id>P29474</id>
        <label>NOS3</label>
    </interactant>
    <organismsDiffer>false</organismsDiffer>
    <experiments>3</experiments>
</comment>
<comment type="interaction">
    <interactant intactId="EBI-1049638">
        <id>Q14525</id>
    </interactant>
    <interactant intactId="EBI-741048">
        <id>Q7Z3B4</id>
        <label>NUP54</label>
    </interactant>
    <organismsDiffer>false</organismsDiffer>
    <experiments>3</experiments>
</comment>
<comment type="interaction">
    <interactant intactId="EBI-1049638">
        <id>Q14525</id>
    </interactant>
    <interactant intactId="EBI-2811583">
        <id>Q9BVL2</id>
        <label>NUP58</label>
    </interactant>
    <organismsDiffer>false</organismsDiffer>
    <experiments>6</experiments>
</comment>
<comment type="interaction">
    <interactant intactId="EBI-1049638">
        <id>Q14525</id>
    </interactant>
    <interactant intactId="EBI-11022007">
        <id>Q9HBE1-4</id>
        <label>PATZ1</label>
    </interactant>
    <organismsDiffer>false</organismsDiffer>
    <experiments>3</experiments>
</comment>
<comment type="interaction">
    <interactant intactId="EBI-1049638">
        <id>Q14525</id>
    </interactant>
    <interactant intactId="EBI-2557469">
        <id>Q6NYC8</id>
        <label>PPP1R18</label>
    </interactant>
    <organismsDiffer>false</organismsDiffer>
    <experiments>3</experiments>
</comment>
<comment type="interaction">
    <interactant intactId="EBI-1049638">
        <id>Q14525</id>
    </interactant>
    <interactant intactId="EBI-752074">
        <id>P41219</id>
        <label>PRPH</label>
    </interactant>
    <organismsDiffer>false</organismsDiffer>
    <experiments>3</experiments>
</comment>
<comment type="interaction">
    <interactant intactId="EBI-1049638">
        <id>Q14525</id>
    </interactant>
    <interactant intactId="EBI-749195">
        <id>P60891</id>
        <label>PRPS1</label>
    </interactant>
    <organismsDiffer>false</organismsDiffer>
    <experiments>3</experiments>
</comment>
<comment type="interaction">
    <interactant intactId="EBI-1049638">
        <id>Q14525</id>
    </interactant>
    <interactant intactId="EBI-958239">
        <id>Q9ULW5</id>
        <label>RAB26</label>
    </interactant>
    <organismsDiffer>false</organismsDiffer>
    <experiments>3</experiments>
</comment>
<comment type="interaction">
    <interactant intactId="EBI-1049638">
        <id>Q14525</id>
    </interactant>
    <interactant intactId="EBI-744023">
        <id>Q9BTL3</id>
        <label>RAMAC</label>
    </interactant>
    <organismsDiffer>false</organismsDiffer>
    <experiments>3</experiments>
</comment>
<comment type="interaction">
    <interactant intactId="EBI-1049638">
        <id>Q14525</id>
    </interactant>
    <interactant intactId="EBI-396669">
        <id>Q9Y3C5</id>
        <label>RNF11</label>
    </interactant>
    <organismsDiffer>false</organismsDiffer>
    <experiments>3</experiments>
</comment>
<comment type="interaction">
    <interactant intactId="EBI-1049638">
        <id>Q14525</id>
    </interactant>
    <interactant intactId="EBI-10217913">
        <id>Q14D33</id>
        <label>RTP5</label>
    </interactant>
    <organismsDiffer>false</organismsDiffer>
    <experiments>3</experiments>
</comment>
<comment type="interaction">
    <interactant intactId="EBI-1049638">
        <id>Q14525</id>
    </interactant>
    <interactant intactId="EBI-11984663">
        <id>Q06455-2</id>
        <label>RUNX1T1</label>
    </interactant>
    <organismsDiffer>false</organismsDiffer>
    <experiments>3</experiments>
</comment>
<comment type="interaction">
    <interactant intactId="EBI-1049638">
        <id>Q14525</id>
    </interactant>
    <interactant intactId="EBI-748391">
        <id>Q9BWG6</id>
        <label>SCNM1</label>
    </interactant>
    <organismsDiffer>false</organismsDiffer>
    <experiments>3</experiments>
</comment>
<comment type="interaction">
    <interactant intactId="EBI-1049638">
        <id>Q14525</id>
    </interactant>
    <interactant intactId="EBI-743117">
        <id>Q96ES7</id>
        <label>SGF29</label>
    </interactant>
    <organismsDiffer>false</organismsDiffer>
    <experiments>3</experiments>
</comment>
<comment type="interaction">
    <interactant intactId="EBI-1049638">
        <id>Q14525</id>
    </interactant>
    <interactant intactId="EBI-79084">
        <id>Q92529</id>
        <label>SHC3</label>
    </interactant>
    <organismsDiffer>false</organismsDiffer>
    <experiments>3</experiments>
</comment>
<comment type="interaction">
    <interactant intactId="EBI-1049638">
        <id>Q14525</id>
    </interactant>
    <interactant intactId="EBI-5235340">
        <id>Q7Z699</id>
        <label>SPRED1</label>
    </interactant>
    <organismsDiffer>false</organismsDiffer>
    <experiments>3</experiments>
</comment>
<comment type="interaction">
    <interactant intactId="EBI-1049638">
        <id>Q14525</id>
    </interactant>
    <interactant intactId="EBI-743272">
        <id>O75604</id>
        <label>USP2</label>
    </interactant>
    <organismsDiffer>false</organismsDiffer>
    <experiments>3</experiments>
</comment>
<comment type="interaction">
    <interactant intactId="EBI-1049638">
        <id>Q14525</id>
    </interactant>
    <interactant intactId="EBI-2559305">
        <id>A5D8V6</id>
        <label>VPS37C</label>
    </interactant>
    <organismsDiffer>false</organismsDiffer>
    <experiments>3</experiments>
</comment>
<comment type="interaction">
    <interactant intactId="EBI-1049638">
        <id>Q14525</id>
    </interactant>
    <interactant intactId="EBI-720609">
        <id>O76024</id>
        <label>WFS1</label>
    </interactant>
    <organismsDiffer>false</organismsDiffer>
    <experiments>3</experiments>
</comment>
<comment type="interaction">
    <interactant intactId="EBI-1049638">
        <id>Q14525</id>
    </interactant>
    <interactant intactId="EBI-25900580">
        <id>Q9Y649</id>
    </interactant>
    <organismsDiffer>false</organismsDiffer>
    <experiments>3</experiments>
</comment>
<comment type="miscellaneous">
    <text>There are two types of hair/microfibrillar keratin, I (acidic) and II (neutral to basic).</text>
</comment>
<comment type="similarity">
    <text evidence="1">Belongs to the intermediate filament family.</text>
</comment>
<protein>
    <recommendedName>
        <fullName>Keratin, type I cuticular Ha3-II</fullName>
    </recommendedName>
    <alternativeName>
        <fullName>Hair keratin, type I Ha3-II</fullName>
    </alternativeName>
    <alternativeName>
        <fullName>Keratin-33B</fullName>
        <shortName>K33B</shortName>
    </alternativeName>
</protein>
<evidence type="ECO:0000255" key="1">
    <source>
        <dbReference type="PROSITE-ProRule" id="PRU01188"/>
    </source>
</evidence>
<evidence type="ECO:0000305" key="2"/>
<accession>Q14525</accession>
<accession>O76010</accession>